<proteinExistence type="evidence at transcript level"/>
<comment type="function">
    <text evidence="1">Together with methyltransferase FTSJ1, methylates the 2'-O-ribose of nucleotides at position 32 of the anticodon loop of substrate tRNAs.</text>
</comment>
<comment type="similarity">
    <text evidence="4">Belongs to the THADA family.</text>
</comment>
<reference key="1">
    <citation type="journal article" date="2007" name="Gene">
        <title>A domain of the thyroid adenoma associated gene (THADA) conserved in vertebrates becomes destroyed by chromosomal rearrangements observed in thyroid adenomas.</title>
        <authorList>
            <person name="Drieschner N."/>
            <person name="Kerschling S."/>
            <person name="Soller J.T."/>
            <person name="Rippe V."/>
            <person name="Belge G."/>
            <person name="Bullerdiek J."/>
            <person name="Nimzyk R."/>
        </authorList>
    </citation>
    <scope>NUCLEOTIDE SEQUENCE [MRNA]</scope>
    <source>
        <tissue>Testis</tissue>
    </source>
</reference>
<dbReference type="EMBL" id="EF222204">
    <property type="protein sequence ID" value="ABQ10598.1"/>
    <property type="molecule type" value="mRNA"/>
</dbReference>
<dbReference type="RefSeq" id="NP_001103429.1">
    <property type="nucleotide sequence ID" value="NM_001109959.1"/>
</dbReference>
<dbReference type="RefSeq" id="XP_005625722.1">
    <property type="nucleotide sequence ID" value="XM_005625665.2"/>
</dbReference>
<dbReference type="RefSeq" id="XP_038534647.1">
    <property type="nucleotide sequence ID" value="XM_038678719.1"/>
</dbReference>
<dbReference type="SMR" id="A8C750"/>
<dbReference type="FunCoup" id="A8C750">
    <property type="interactions" value="2236"/>
</dbReference>
<dbReference type="STRING" id="9615.ENSCAFP00000046692"/>
<dbReference type="PaxDb" id="9612-ENSCAFP00000003591"/>
<dbReference type="GeneID" id="100126180"/>
<dbReference type="KEGG" id="cfa:100126180"/>
<dbReference type="CTD" id="63892"/>
<dbReference type="eggNOG" id="KOG1810">
    <property type="taxonomic scope" value="Eukaryota"/>
</dbReference>
<dbReference type="HOGENOM" id="CLU_002048_0_0_1"/>
<dbReference type="InParanoid" id="A8C750"/>
<dbReference type="OMA" id="CTSIPEW"/>
<dbReference type="OrthoDB" id="73997at2759"/>
<dbReference type="TreeFam" id="TF319713"/>
<dbReference type="Proteomes" id="UP000002254">
    <property type="component" value="Unplaced"/>
</dbReference>
<dbReference type="Proteomes" id="UP000694429">
    <property type="component" value="Unplaced"/>
</dbReference>
<dbReference type="Proteomes" id="UP000694542">
    <property type="component" value="Unplaced"/>
</dbReference>
<dbReference type="Proteomes" id="UP000805418">
    <property type="component" value="Unplaced"/>
</dbReference>
<dbReference type="GO" id="GO:0030488">
    <property type="term" value="P:tRNA methylation"/>
    <property type="evidence" value="ECO:0000318"/>
    <property type="project" value="GO_Central"/>
</dbReference>
<dbReference type="GO" id="GO:0002128">
    <property type="term" value="P:tRNA nucleoside ribose methylation"/>
    <property type="evidence" value="ECO:0000250"/>
    <property type="project" value="UniProtKB"/>
</dbReference>
<dbReference type="InterPro" id="IPR016024">
    <property type="entry name" value="ARM-type_fold"/>
</dbReference>
<dbReference type="InterPro" id="IPR056843">
    <property type="entry name" value="THADA-like_TPR"/>
</dbReference>
<dbReference type="InterPro" id="IPR056842">
    <property type="entry name" value="THADA-like_TPR_C"/>
</dbReference>
<dbReference type="InterPro" id="IPR019442">
    <property type="entry name" value="THADA/TRM732_DUF2428"/>
</dbReference>
<dbReference type="InterPro" id="IPR051954">
    <property type="entry name" value="tRNA_methyltransferase_THADA"/>
</dbReference>
<dbReference type="PANTHER" id="PTHR14387">
    <property type="entry name" value="THADA/DEATH RECEPTOR INTERACTING PROTEIN"/>
    <property type="match status" value="1"/>
</dbReference>
<dbReference type="PANTHER" id="PTHR14387:SF7">
    <property type="entry name" value="THYROID ADENOMA-ASSOCIATED PROTEIN"/>
    <property type="match status" value="1"/>
</dbReference>
<dbReference type="Pfam" id="PF10350">
    <property type="entry name" value="DUF2428"/>
    <property type="match status" value="1"/>
</dbReference>
<dbReference type="Pfam" id="PF25150">
    <property type="entry name" value="TPR_Trm732"/>
    <property type="match status" value="1"/>
</dbReference>
<dbReference type="Pfam" id="PF25151">
    <property type="entry name" value="TPR_Trm732_C"/>
    <property type="match status" value="1"/>
</dbReference>
<dbReference type="SUPFAM" id="SSF48371">
    <property type="entry name" value="ARM repeat"/>
    <property type="match status" value="2"/>
</dbReference>
<gene>
    <name type="primary">THADA</name>
</gene>
<evidence type="ECO:0000250" key="1">
    <source>
        <dbReference type="UniProtKB" id="Q6YHU6"/>
    </source>
</evidence>
<evidence type="ECO:0000255" key="2"/>
<evidence type="ECO:0000256" key="3">
    <source>
        <dbReference type="SAM" id="MobiDB-lite"/>
    </source>
</evidence>
<evidence type="ECO:0000305" key="4"/>
<organism>
    <name type="scientific">Canis lupus familiaris</name>
    <name type="common">Dog</name>
    <name type="synonym">Canis familiaris</name>
    <dbReference type="NCBI Taxonomy" id="9615"/>
    <lineage>
        <taxon>Eukaryota</taxon>
        <taxon>Metazoa</taxon>
        <taxon>Chordata</taxon>
        <taxon>Craniata</taxon>
        <taxon>Vertebrata</taxon>
        <taxon>Euteleostomi</taxon>
        <taxon>Mammalia</taxon>
        <taxon>Eutheria</taxon>
        <taxon>Laurasiatheria</taxon>
        <taxon>Carnivora</taxon>
        <taxon>Caniformia</taxon>
        <taxon>Canidae</taxon>
        <taxon>Canis</taxon>
    </lineage>
</organism>
<protein>
    <recommendedName>
        <fullName evidence="4">tRNA (32-2'-O)-methyltransferase regulator THADA</fullName>
    </recommendedName>
    <alternativeName>
        <fullName>Thyroid adenoma-associated protein homolog</fullName>
    </alternativeName>
</protein>
<keyword id="KW-0175">Coiled coil</keyword>
<keyword id="KW-0597">Phosphoprotein</keyword>
<keyword id="KW-1185">Reference proteome</keyword>
<keyword id="KW-0819">tRNA processing</keyword>
<sequence>MGVKKKKEMQVTALTICHQDLETLRFLADVEGKNLASLLLYCVQLTDGVSQIHYVKQIVPLLEKADKNGACDPIIRSCLDILAGIYLSLSVKNPLKKVLASSLNGLPEFFLTEAIQSFTSRLQEELNTTDLYSYRKVIDNISSCMENFDLGRAGVNNLLKNVLHFLQKSLIEISEENRKFAGNRIVQTQLMNDLLVGTRVSVMLVQKIQDIQRIHLKTSSSPTWQSMCGLLSIFTKFLSDDDLLQTIQSTSGLAVILFIKAMFHPPEKIPDLISSLLLRSVDCTSIPDWFLNCCRSLCCTDVSQSTLLFLCQGTLTMLDWQNGSMDLSGEALLLNIVHILFTLSSQIKESTLELFLSRILASWTNSAIHVLKSSSPSLKNSLNGKSSVVGRLLEYVYTHWEHPLDALRHQTKIIFRNILQMHQLTKEKSNSEVSGLAADHFICDLTEGLLRLEWHVKGKYTCLGCLVDYIGIGHILALAKTIPSQILEVMGDQSLVPYASDLLETMFRSHKNHLKSQALDSTWIDEWHETWVSPLLFILCEGNLDQKSYVIDYYLPKLLNCSPESLSYMVKILQTSADAKTGSYNSRGALGALMACLRTARAHGHLQSATDTWRNLVSSARIKQGLIHQHCQVRIDTLGLLCESNRSTEIVSTEEMQWIQFFITYNLNSQSPGVRQQICSLLKKLFCRIQESSQVLYKQEQSRSKHEPENELTKQHPSVSLQQYKNFMSSICSHLFEALFPGSSYPTRFSALTILGSIAEVFPVTEGQVQAVYQLSHDIDVGRFQTLMECFTSTFEEVKILAFDLLMKLPKTVVQFQDSEKLQGLFQAALELSSSTKPYDCVTASYLLNFLIWQDVLPSSLFDSLKTQQTACEDGDKSAIVVERNTLMVIKCLLENLEEEVSQAENSLLQAAASFPLYGRVHCVTGALQRLSLNNLQLVSEWRPVIEKLLLMSYRLSAVVSPVIQSSSPEGLIPMDTDSESASRLQTILNEIQPRDTNDYFTQAKILKEHDSFDLEDLNVSVQNIGASAEVKGKERKTCDVTAQMVLVCCWRSMKEVALLLGTLCQLLPMQSVPESSNGLLTEEQVKEIGDYFKQHLLQSRHRGAFELAYTGFVKLTEILNRCPNVSLQKLPEQWLWNVLEEIKCSDPSSKLCATRRSAGIPFYIQALLASEPKKGKMDLLKITMKELISLAGPTDDSQSTVPQVHALNILRALFRDTRLGENIIPYVADGAKAAILGFTSPVWAVRNSSTLLFSTLITRIFGVKRGKDELSKKNRMTGSEFFSRFPELYPFLLQQLEAVANTVDSDTGELNRHPSMFLLLLVLGRLYPSPMDGTYSALSMAPFIPFIMRCGRSPDYRSREMAARALVPFVMVDEIPTTIRTLLAKLPNCTDQRFRQNHIHGTLLQVFHLLQAFTDSKYRLNTYFQQELADVAVCTRAKLWLAERQNPCLVTRAVYIDILFLLTRCLDKPTKGNQPAVECLGFWEDVRRIISGSELITGFTYTFTVPGLPQYLQSLTKLAITTAAVAAQAGEQAGNIPISFSQLLESSFPEVRLLTLEALLERFSTAALGLGEKGLPPLQRNMGETFLMLAVKENHPECFCKILKILHCMDPSEWLSHMQRCIHLTPKEFLIWTMDIASNERSEVQSVALRLASRVIAHHLQMCEETRDSVAPTLKQWVQLVVSSCGEHLPTESRLAAAEALTSTTPFLLTSPHPVLGLQDTLALWRCVLTLLQSEEQAVRDAATGTVVTAMSQENTCRSTEFAFCQVDASIALTLALAVLCDLLQQWDQLALGLPVLLGWLLGEDDDFVVHLENTHQVEDYLFEKAEINFWAETLIFVKYLHEHLLRLLSTSSRRPLSPESLRHLRRTASEQGHLLSQLFRELPPAAEFLKTVEFTRLRIQEERTLACLQLLAFLEGKEREDTPVLRASDSPAEANQFTLAKTETAH</sequence>
<accession>A8C750</accession>
<feature type="chain" id="PRO_0000344055" description="tRNA (32-2'-O)-methyltransferase regulator THADA">
    <location>
        <begin position="1"/>
        <end position="1948"/>
    </location>
</feature>
<feature type="region of interest" description="Disordered" evidence="3">
    <location>
        <begin position="1924"/>
        <end position="1948"/>
    </location>
</feature>
<feature type="coiled-coil region" evidence="2">
    <location>
        <begin position="883"/>
        <end position="915"/>
    </location>
</feature>
<feature type="compositionally biased region" description="Polar residues" evidence="3">
    <location>
        <begin position="1935"/>
        <end position="1948"/>
    </location>
</feature>
<feature type="modified residue" description="Phosphoserine" evidence="1">
    <location>
        <position position="1012"/>
    </location>
</feature>
<feature type="modified residue" description="Phosphoserine" evidence="1">
    <location>
        <position position="1021"/>
    </location>
</feature>
<feature type="modified residue" description="Phosphoserine" evidence="1">
    <location>
        <position position="1158"/>
    </location>
</feature>
<name>THADA_CANLF</name>